<proteinExistence type="evidence at transcript level"/>
<gene>
    <name type="primary">Arsk</name>
</gene>
<dbReference type="EC" id="3.1.6.1" evidence="2"/>
<dbReference type="EC" id="3.1.6.18" evidence="2"/>
<dbReference type="EMBL" id="AABR03012430">
    <property type="status" value="NOT_ANNOTATED_CDS"/>
    <property type="molecule type" value="Genomic_DNA"/>
</dbReference>
<dbReference type="EMBL" id="AABR03016345">
    <property type="status" value="NOT_ANNOTATED_CDS"/>
    <property type="molecule type" value="Genomic_DNA"/>
</dbReference>
<dbReference type="EMBL" id="AABR03016385">
    <property type="status" value="NOT_ANNOTATED_CDS"/>
    <property type="molecule type" value="Genomic_DNA"/>
</dbReference>
<dbReference type="EMBL" id="BN000745">
    <property type="protein sequence ID" value="CAI84991.1"/>
    <property type="molecule type" value="mRNA"/>
</dbReference>
<dbReference type="RefSeq" id="NP_001041382.1">
    <property type="nucleotide sequence ID" value="NM_001047917.2"/>
</dbReference>
<dbReference type="SMR" id="Q32KJ2"/>
<dbReference type="FunCoup" id="Q32KJ2">
    <property type="interactions" value="647"/>
</dbReference>
<dbReference type="STRING" id="10116.ENSRNOP00000029855"/>
<dbReference type="GlyCosmos" id="Q32KJ2">
    <property type="glycosylation" value="6 sites, No reported glycans"/>
</dbReference>
<dbReference type="GlyGen" id="Q32KJ2">
    <property type="glycosylation" value="6 sites"/>
</dbReference>
<dbReference type="PhosphoSitePlus" id="Q32KJ2"/>
<dbReference type="PaxDb" id="10116-ENSRNOP00000029855"/>
<dbReference type="Ensembl" id="ENSRNOT00000029250.7">
    <property type="protein sequence ID" value="ENSRNOP00000029855.5"/>
    <property type="gene ID" value="ENSRNOG00000026937.7"/>
</dbReference>
<dbReference type="GeneID" id="365619"/>
<dbReference type="KEGG" id="rno:365619"/>
<dbReference type="UCSC" id="RGD:1310182">
    <property type="organism name" value="rat"/>
</dbReference>
<dbReference type="AGR" id="RGD:1310182"/>
<dbReference type="CTD" id="153642"/>
<dbReference type="RGD" id="1310182">
    <property type="gene designation" value="Arsk"/>
</dbReference>
<dbReference type="eggNOG" id="KOG3731">
    <property type="taxonomic scope" value="Eukaryota"/>
</dbReference>
<dbReference type="GeneTree" id="ENSGT00940000158982"/>
<dbReference type="HOGENOM" id="CLU_006332_6_0_1"/>
<dbReference type="InParanoid" id="Q32KJ2"/>
<dbReference type="OMA" id="RAYFGAC"/>
<dbReference type="OrthoDB" id="52721at9989"/>
<dbReference type="PhylomeDB" id="Q32KJ2"/>
<dbReference type="Reactome" id="R-RNO-1663150">
    <property type="pathway name" value="The activation of arylsulfatases"/>
</dbReference>
<dbReference type="Reactome" id="R-RNO-9840310">
    <property type="pathway name" value="Glycosphingolipid catabolism"/>
</dbReference>
<dbReference type="PRO" id="PR:Q32KJ2"/>
<dbReference type="Proteomes" id="UP000002494">
    <property type="component" value="Chromosome 2"/>
</dbReference>
<dbReference type="Bgee" id="ENSRNOG00000026937">
    <property type="expression patterns" value="Expressed in ovary and 19 other cell types or tissues"/>
</dbReference>
<dbReference type="GO" id="GO:0005576">
    <property type="term" value="C:extracellular region"/>
    <property type="evidence" value="ECO:0000250"/>
    <property type="project" value="UniProtKB"/>
</dbReference>
<dbReference type="GO" id="GO:0005764">
    <property type="term" value="C:lysosome"/>
    <property type="evidence" value="ECO:0000250"/>
    <property type="project" value="UniProtKB"/>
</dbReference>
<dbReference type="GO" id="GO:0004065">
    <property type="term" value="F:arylsulfatase activity"/>
    <property type="evidence" value="ECO:0000250"/>
    <property type="project" value="UniProtKB"/>
</dbReference>
<dbReference type="GO" id="GO:0015024">
    <property type="term" value="F:glucuronate-2-sulfatase activity"/>
    <property type="evidence" value="ECO:0000250"/>
    <property type="project" value="UniProtKB"/>
</dbReference>
<dbReference type="GO" id="GO:0046872">
    <property type="term" value="F:metal ion binding"/>
    <property type="evidence" value="ECO:0007669"/>
    <property type="project" value="UniProtKB-KW"/>
</dbReference>
<dbReference type="CDD" id="cd16171">
    <property type="entry name" value="ARSK"/>
    <property type="match status" value="1"/>
</dbReference>
<dbReference type="FunFam" id="3.40.720.10:FF:000039">
    <property type="entry name" value="arylsulfatase K"/>
    <property type="match status" value="1"/>
</dbReference>
<dbReference type="Gene3D" id="3.40.720.10">
    <property type="entry name" value="Alkaline Phosphatase, subunit A"/>
    <property type="match status" value="1"/>
</dbReference>
<dbReference type="InterPro" id="IPR017850">
    <property type="entry name" value="Alkaline_phosphatase_core_sf"/>
</dbReference>
<dbReference type="InterPro" id="IPR047892">
    <property type="entry name" value="ARSK"/>
</dbReference>
<dbReference type="InterPro" id="IPR051849">
    <property type="entry name" value="GAG-degrading_sulfatase"/>
</dbReference>
<dbReference type="InterPro" id="IPR000917">
    <property type="entry name" value="Sulfatase_N"/>
</dbReference>
<dbReference type="PANTHER" id="PTHR46615">
    <property type="entry name" value="ARYLSULFATASE K"/>
    <property type="match status" value="1"/>
</dbReference>
<dbReference type="PANTHER" id="PTHR46615:SF1">
    <property type="entry name" value="ARYLSULFATASE K"/>
    <property type="match status" value="1"/>
</dbReference>
<dbReference type="Pfam" id="PF00884">
    <property type="entry name" value="Sulfatase"/>
    <property type="match status" value="2"/>
</dbReference>
<dbReference type="SUPFAM" id="SSF53649">
    <property type="entry name" value="Alkaline phosphatase-like"/>
    <property type="match status" value="1"/>
</dbReference>
<comment type="function">
    <text evidence="2">Catalyzes the hydrolysis of pseudosubstrates such as p-nitrocatechol sulfate and p-nitrophenyl sulfate (By similarity). Catalyzes the hydrolysis of the 2-sulfate groups of the 2-O-sulfo-D-glucuronate residues of chondroitin sulfate, heparin and heparitin sulfate (By similarity). Acts selectively on 2-sulfoglucuronate and lacks activity against 2-sulfoiduronate (By similarity).</text>
</comment>
<comment type="catalytic activity">
    <reaction evidence="2">
        <text>an aryl sulfate + H2O = a phenol + sulfate + H(+)</text>
        <dbReference type="Rhea" id="RHEA:17261"/>
        <dbReference type="ChEBI" id="CHEBI:15377"/>
        <dbReference type="ChEBI" id="CHEBI:15378"/>
        <dbReference type="ChEBI" id="CHEBI:16189"/>
        <dbReference type="ChEBI" id="CHEBI:33853"/>
        <dbReference type="ChEBI" id="CHEBI:140317"/>
        <dbReference type="EC" id="3.1.6.1"/>
    </reaction>
</comment>
<comment type="catalytic activity">
    <reaction evidence="2">
        <text>Hydrolysis of the 2-sulfate groups of the 2-O-sulfo-D-glucuronate residues of chondroitin sulfate, heparin and heparitin sulfate.</text>
        <dbReference type="EC" id="3.1.6.18"/>
    </reaction>
</comment>
<comment type="cofactor">
    <cofactor evidence="1">
        <name>Ca(2+)</name>
        <dbReference type="ChEBI" id="CHEBI:29108"/>
    </cofactor>
    <text evidence="1">Binds 1 Ca(2+) ion per subunit.</text>
</comment>
<comment type="subcellular location">
    <subcellularLocation>
        <location evidence="2">Secreted</location>
    </subcellularLocation>
    <subcellularLocation>
        <location evidence="2">Lysosome</location>
    </subcellularLocation>
</comment>
<comment type="PTM">
    <text evidence="2">The conversion to 3-oxoalanine (also known as C-formylglycine, FGly), of a serine or cysteine residue in prokaryotes and of a cysteine residue in eukaryotes, is critical for catalytic activity.</text>
</comment>
<comment type="PTM">
    <text evidence="2">The 75-kDa precursor undergoes proteolytic processing to yield a 23 kDa form.</text>
</comment>
<comment type="PTM">
    <text evidence="2">N-glycosylated with both high mannose and complex type sugars.</text>
</comment>
<comment type="similarity">
    <text evidence="4">Belongs to the sulfatase family.</text>
</comment>
<reference key="1">
    <citation type="journal article" date="2004" name="Nature">
        <title>Genome sequence of the Brown Norway rat yields insights into mammalian evolution.</title>
        <authorList>
            <person name="Gibbs R.A."/>
            <person name="Weinstock G.M."/>
            <person name="Metzker M.L."/>
            <person name="Muzny D.M."/>
            <person name="Sodergren E.J."/>
            <person name="Scherer S."/>
            <person name="Scott G."/>
            <person name="Steffen D."/>
            <person name="Worley K.C."/>
            <person name="Burch P.E."/>
            <person name="Okwuonu G."/>
            <person name="Hines S."/>
            <person name="Lewis L."/>
            <person name="Deramo C."/>
            <person name="Delgado O."/>
            <person name="Dugan-Rocha S."/>
            <person name="Miner G."/>
            <person name="Morgan M."/>
            <person name="Hawes A."/>
            <person name="Gill R."/>
            <person name="Holt R.A."/>
            <person name="Adams M.D."/>
            <person name="Amanatides P.G."/>
            <person name="Baden-Tillson H."/>
            <person name="Barnstead M."/>
            <person name="Chin S."/>
            <person name="Evans C.A."/>
            <person name="Ferriera S."/>
            <person name="Fosler C."/>
            <person name="Glodek A."/>
            <person name="Gu Z."/>
            <person name="Jennings D."/>
            <person name="Kraft C.L."/>
            <person name="Nguyen T."/>
            <person name="Pfannkoch C.M."/>
            <person name="Sitter C."/>
            <person name="Sutton G.G."/>
            <person name="Venter J.C."/>
            <person name="Woodage T."/>
            <person name="Smith D."/>
            <person name="Lee H.-M."/>
            <person name="Gustafson E."/>
            <person name="Cahill P."/>
            <person name="Kana A."/>
            <person name="Doucette-Stamm L."/>
            <person name="Weinstock K."/>
            <person name="Fechtel K."/>
            <person name="Weiss R.B."/>
            <person name="Dunn D.M."/>
            <person name="Green E.D."/>
            <person name="Blakesley R.W."/>
            <person name="Bouffard G.G."/>
            <person name="De Jong P.J."/>
            <person name="Osoegawa K."/>
            <person name="Zhu B."/>
            <person name="Marra M."/>
            <person name="Schein J."/>
            <person name="Bosdet I."/>
            <person name="Fjell C."/>
            <person name="Jones S."/>
            <person name="Krzywinski M."/>
            <person name="Mathewson C."/>
            <person name="Siddiqui A."/>
            <person name="Wye N."/>
            <person name="McPherson J."/>
            <person name="Zhao S."/>
            <person name="Fraser C.M."/>
            <person name="Shetty J."/>
            <person name="Shatsman S."/>
            <person name="Geer K."/>
            <person name="Chen Y."/>
            <person name="Abramzon S."/>
            <person name="Nierman W.C."/>
            <person name="Havlak P.H."/>
            <person name="Chen R."/>
            <person name="Durbin K.J."/>
            <person name="Egan A."/>
            <person name="Ren Y."/>
            <person name="Song X.-Z."/>
            <person name="Li B."/>
            <person name="Liu Y."/>
            <person name="Qin X."/>
            <person name="Cawley S."/>
            <person name="Cooney A.J."/>
            <person name="D'Souza L.M."/>
            <person name="Martin K."/>
            <person name="Wu J.Q."/>
            <person name="Gonzalez-Garay M.L."/>
            <person name="Jackson A.R."/>
            <person name="Kalafus K.J."/>
            <person name="McLeod M.P."/>
            <person name="Milosavljevic A."/>
            <person name="Virk D."/>
            <person name="Volkov A."/>
            <person name="Wheeler D.A."/>
            <person name="Zhang Z."/>
            <person name="Bailey J.A."/>
            <person name="Eichler E.E."/>
            <person name="Tuzun E."/>
            <person name="Birney E."/>
            <person name="Mongin E."/>
            <person name="Ureta-Vidal A."/>
            <person name="Woodwark C."/>
            <person name="Zdobnov E."/>
            <person name="Bork P."/>
            <person name="Suyama M."/>
            <person name="Torrents D."/>
            <person name="Alexandersson M."/>
            <person name="Trask B.J."/>
            <person name="Young J.M."/>
            <person name="Huang H."/>
            <person name="Wang H."/>
            <person name="Xing H."/>
            <person name="Daniels S."/>
            <person name="Gietzen D."/>
            <person name="Schmidt J."/>
            <person name="Stevens K."/>
            <person name="Vitt U."/>
            <person name="Wingrove J."/>
            <person name="Camara F."/>
            <person name="Mar Alba M."/>
            <person name="Abril J.F."/>
            <person name="Guigo R."/>
            <person name="Smit A."/>
            <person name="Dubchak I."/>
            <person name="Rubin E.M."/>
            <person name="Couronne O."/>
            <person name="Poliakov A."/>
            <person name="Huebner N."/>
            <person name="Ganten D."/>
            <person name="Goesele C."/>
            <person name="Hummel O."/>
            <person name="Kreitler T."/>
            <person name="Lee Y.-A."/>
            <person name="Monti J."/>
            <person name="Schulz H."/>
            <person name="Zimdahl H."/>
            <person name="Himmelbauer H."/>
            <person name="Lehrach H."/>
            <person name="Jacob H.J."/>
            <person name="Bromberg S."/>
            <person name="Gullings-Handley J."/>
            <person name="Jensen-Seaman M.I."/>
            <person name="Kwitek A.E."/>
            <person name="Lazar J."/>
            <person name="Pasko D."/>
            <person name="Tonellato P.J."/>
            <person name="Twigger S."/>
            <person name="Ponting C.P."/>
            <person name="Duarte J.M."/>
            <person name="Rice S."/>
            <person name="Goodstadt L."/>
            <person name="Beatson S.A."/>
            <person name="Emes R.D."/>
            <person name="Winter E.E."/>
            <person name="Webber C."/>
            <person name="Brandt P."/>
            <person name="Nyakatura G."/>
            <person name="Adetobi M."/>
            <person name="Chiaromonte F."/>
            <person name="Elnitski L."/>
            <person name="Eswara P."/>
            <person name="Hardison R.C."/>
            <person name="Hou M."/>
            <person name="Kolbe D."/>
            <person name="Makova K."/>
            <person name="Miller W."/>
            <person name="Nekrutenko A."/>
            <person name="Riemer C."/>
            <person name="Schwartz S."/>
            <person name="Taylor J."/>
            <person name="Yang S."/>
            <person name="Zhang Y."/>
            <person name="Lindpaintner K."/>
            <person name="Andrews T.D."/>
            <person name="Caccamo M."/>
            <person name="Clamp M."/>
            <person name="Clarke L."/>
            <person name="Curwen V."/>
            <person name="Durbin R.M."/>
            <person name="Eyras E."/>
            <person name="Searle S.M."/>
            <person name="Cooper G.M."/>
            <person name="Batzoglou S."/>
            <person name="Brudno M."/>
            <person name="Sidow A."/>
            <person name="Stone E.A."/>
            <person name="Payseur B.A."/>
            <person name="Bourque G."/>
            <person name="Lopez-Otin C."/>
            <person name="Puente X.S."/>
            <person name="Chakrabarti K."/>
            <person name="Chatterji S."/>
            <person name="Dewey C."/>
            <person name="Pachter L."/>
            <person name="Bray N."/>
            <person name="Yap V.B."/>
            <person name="Caspi A."/>
            <person name="Tesler G."/>
            <person name="Pevzner P.A."/>
            <person name="Haussler D."/>
            <person name="Roskin K.M."/>
            <person name="Baertsch R."/>
            <person name="Clawson H."/>
            <person name="Furey T.S."/>
            <person name="Hinrichs A.S."/>
            <person name="Karolchik D."/>
            <person name="Kent W.J."/>
            <person name="Rosenbloom K.R."/>
            <person name="Trumbower H."/>
            <person name="Weirauch M."/>
            <person name="Cooper D.N."/>
            <person name="Stenson P.D."/>
            <person name="Ma B."/>
            <person name="Brent M."/>
            <person name="Arumugam M."/>
            <person name="Shteynberg D."/>
            <person name="Copley R.R."/>
            <person name="Taylor M.S."/>
            <person name="Riethman H."/>
            <person name="Mudunuri U."/>
            <person name="Peterson J."/>
            <person name="Guyer M."/>
            <person name="Felsenfeld A."/>
            <person name="Old S."/>
            <person name="Mockrin S."/>
            <person name="Collins F.S."/>
        </authorList>
    </citation>
    <scope>NUCLEOTIDE SEQUENCE [LARGE SCALE GENOMIC DNA]</scope>
    <source>
        <strain>Brown Norway</strain>
    </source>
</reference>
<reference key="2">
    <citation type="journal article" date="2005" name="Hum. Mol. Genet.">
        <title>Sulfatases and sulfatase modifying factors: an exclusive and promiscuous relationship.</title>
        <authorList>
            <person name="Sardiello M."/>
            <person name="Annunziata I."/>
            <person name="Roma G."/>
            <person name="Ballabio A."/>
        </authorList>
    </citation>
    <scope>IDENTIFICATION</scope>
</reference>
<organism>
    <name type="scientific">Rattus norvegicus</name>
    <name type="common">Rat</name>
    <dbReference type="NCBI Taxonomy" id="10116"/>
    <lineage>
        <taxon>Eukaryota</taxon>
        <taxon>Metazoa</taxon>
        <taxon>Chordata</taxon>
        <taxon>Craniata</taxon>
        <taxon>Vertebrata</taxon>
        <taxon>Euteleostomi</taxon>
        <taxon>Mammalia</taxon>
        <taxon>Eutheria</taxon>
        <taxon>Euarchontoglires</taxon>
        <taxon>Glires</taxon>
        <taxon>Rodentia</taxon>
        <taxon>Myomorpha</taxon>
        <taxon>Muroidea</taxon>
        <taxon>Muridae</taxon>
        <taxon>Murinae</taxon>
        <taxon>Rattus</taxon>
    </lineage>
</organism>
<keyword id="KW-0106">Calcium</keyword>
<keyword id="KW-0325">Glycoprotein</keyword>
<keyword id="KW-0378">Hydrolase</keyword>
<keyword id="KW-0458">Lysosome</keyword>
<keyword id="KW-0479">Metal-binding</keyword>
<keyword id="KW-1185">Reference proteome</keyword>
<keyword id="KW-0964">Secreted</keyword>
<keyword id="KW-0732">Signal</keyword>
<evidence type="ECO:0000250" key="1">
    <source>
        <dbReference type="UniProtKB" id="P15289"/>
    </source>
</evidence>
<evidence type="ECO:0000250" key="2">
    <source>
        <dbReference type="UniProtKB" id="Q6UWY0"/>
    </source>
</evidence>
<evidence type="ECO:0000255" key="3"/>
<evidence type="ECO:0000305" key="4"/>
<protein>
    <recommendedName>
        <fullName>Arylsulfatase K</fullName>
        <shortName>ASK</shortName>
        <ecNumber evidence="2">3.1.6.1</ecNumber>
    </recommendedName>
    <alternativeName>
        <fullName>Glucuronate-2-sulfatase</fullName>
        <ecNumber evidence="2">3.1.6.18</ecNumber>
    </alternativeName>
</protein>
<feature type="signal peptide" evidence="3">
    <location>
        <begin position="1"/>
        <end position="17"/>
    </location>
</feature>
<feature type="chain" id="PRO_0000356287" description="Arylsulfatase K">
    <location>
        <begin position="18"/>
        <end position="563"/>
    </location>
</feature>
<feature type="active site" description="Nucleophile" evidence="1">
    <location>
        <position position="80"/>
    </location>
</feature>
<feature type="binding site" evidence="1">
    <location>
        <position position="40"/>
    </location>
    <ligand>
        <name>Ca(2+)</name>
        <dbReference type="ChEBI" id="CHEBI:29108"/>
    </ligand>
</feature>
<feature type="binding site" description="via 3-oxoalanine" evidence="1">
    <location>
        <position position="80"/>
    </location>
    <ligand>
        <name>Ca(2+)</name>
        <dbReference type="ChEBI" id="CHEBI:29108"/>
    </ligand>
</feature>
<feature type="binding site" evidence="1">
    <location>
        <position position="128"/>
    </location>
    <ligand>
        <name>substrate</name>
    </ligand>
</feature>
<feature type="binding site" evidence="1">
    <location>
        <position position="249"/>
    </location>
    <ligand>
        <name>substrate</name>
    </ligand>
</feature>
<feature type="binding site" evidence="1">
    <location>
        <position position="311"/>
    </location>
    <ligand>
        <name>Ca(2+)</name>
        <dbReference type="ChEBI" id="CHEBI:29108"/>
    </ligand>
</feature>
<feature type="binding site" evidence="1">
    <location>
        <position position="312"/>
    </location>
    <ligand>
        <name>Ca(2+)</name>
        <dbReference type="ChEBI" id="CHEBI:29108"/>
    </ligand>
</feature>
<feature type="modified residue" description="3-oxoalanine (Cys)" evidence="2">
    <location>
        <position position="80"/>
    </location>
</feature>
<feature type="glycosylation site" description="N-linked (GlcNAc...) asparagine" evidence="3">
    <location>
        <position position="108"/>
    </location>
</feature>
<feature type="glycosylation site" description="N-linked (GlcNAc...) asparagine" evidence="3">
    <location>
        <position position="191"/>
    </location>
</feature>
<feature type="glycosylation site" description="N-linked (GlcNAc...) asparagine" evidence="3">
    <location>
        <position position="260"/>
    </location>
</feature>
<feature type="glycosylation site" description="N-linked (GlcNAc...) asparagine" evidence="3">
    <location>
        <position position="373"/>
    </location>
</feature>
<feature type="glycosylation site" description="N-linked (GlcNAc...) asparagine" evidence="3">
    <location>
        <position position="411"/>
    </location>
</feature>
<feature type="glycosylation site" description="N-linked (GlcNAc...) asparagine" evidence="3">
    <location>
        <position position="496"/>
    </location>
</feature>
<accession>Q32KJ2</accession>
<name>ARSK_RAT</name>
<sequence length="563" mass="64273">MLLLLVSVIVALALVAPAPETQEKRLQVAQAPNVVLVASDSFDGRLTFQPGSQVVKLPFINFMRARGTTFLNAYTNSPICCPSRAAMWSGLFTHLTESWNNFKGLDPNYTTWMDVMEKHGYQTQKFGKLDYSSGHHSISNRVEAWTRDVAFLLRQEGRPIINLIPDKNRRRVMDKDWQNTDKAIAWLRQVNSTKPFVLYLGLNLPHPYPSPSSGENFGSSTFHTSLYWLEKVAYDAIKIPKWLALSEMHPVDYYSSYTKNCTGKFTENEIKNIRAFYYAMCAETDAMLGEIILALHKLNLLQKTIVIYTSDHGEMAMEHRQFYKMSMYEASAHVPILMMGPGIKANLQVPSLVSLVDIYPTMLDIAGIPLPLNLSGYSLLPLSSNTSANDQAFRVHHPPWILSEFHGCNANASTYMLRTGQWKYIAYSDGTLVQPQLFDLSLDPDELTNIATEFPEITYSLDQQLRSVINYPKVSASVHRYNKEQFIMWKQSVAQNYSNYIAHLRWHQDWQKDPRKYENAIQRWLAIHSSPPTHSPLSLVHQWLTTHSSPIAVDNKKTFSSYT</sequence>